<gene>
    <name type="primary">cdsA</name>
    <name type="ordered locus">BR1157</name>
    <name type="ordered locus">BS1330_I1153</name>
</gene>
<dbReference type="EC" id="2.7.7.41"/>
<dbReference type="EMBL" id="AE014291">
    <property type="protein sequence ID" value="AAN30077.1"/>
    <property type="molecule type" value="Genomic_DNA"/>
</dbReference>
<dbReference type="EMBL" id="CP002997">
    <property type="protein sequence ID" value="AEM18495.1"/>
    <property type="molecule type" value="Genomic_DNA"/>
</dbReference>
<dbReference type="RefSeq" id="WP_004685681.1">
    <property type="nucleotide sequence ID" value="NZ_KN046804.1"/>
</dbReference>
<dbReference type="SMR" id="Q8G0E0"/>
<dbReference type="KEGG" id="bms:BR1157"/>
<dbReference type="KEGG" id="bsi:BS1330_I1153"/>
<dbReference type="PATRIC" id="fig|204722.21.peg.1959"/>
<dbReference type="HOGENOM" id="CLU_037294_1_1_5"/>
<dbReference type="PhylomeDB" id="Q8G0E0"/>
<dbReference type="UniPathway" id="UPA00557">
    <property type="reaction ID" value="UER00614"/>
</dbReference>
<dbReference type="Proteomes" id="UP000007104">
    <property type="component" value="Chromosome I"/>
</dbReference>
<dbReference type="GO" id="GO:0005886">
    <property type="term" value="C:plasma membrane"/>
    <property type="evidence" value="ECO:0007669"/>
    <property type="project" value="UniProtKB-SubCell"/>
</dbReference>
<dbReference type="GO" id="GO:0004605">
    <property type="term" value="F:phosphatidate cytidylyltransferase activity"/>
    <property type="evidence" value="ECO:0007669"/>
    <property type="project" value="UniProtKB-EC"/>
</dbReference>
<dbReference type="GO" id="GO:0016024">
    <property type="term" value="P:CDP-diacylglycerol biosynthetic process"/>
    <property type="evidence" value="ECO:0007669"/>
    <property type="project" value="UniProtKB-UniPathway"/>
</dbReference>
<dbReference type="InterPro" id="IPR000374">
    <property type="entry name" value="PC_trans"/>
</dbReference>
<dbReference type="PANTHER" id="PTHR46382">
    <property type="entry name" value="PHOSPHATIDATE CYTIDYLYLTRANSFERASE"/>
    <property type="match status" value="1"/>
</dbReference>
<dbReference type="PANTHER" id="PTHR46382:SF1">
    <property type="entry name" value="PHOSPHATIDATE CYTIDYLYLTRANSFERASE"/>
    <property type="match status" value="1"/>
</dbReference>
<dbReference type="Pfam" id="PF01148">
    <property type="entry name" value="CTP_transf_1"/>
    <property type="match status" value="1"/>
</dbReference>
<dbReference type="PROSITE" id="PS01315">
    <property type="entry name" value="CDS"/>
    <property type="match status" value="1"/>
</dbReference>
<proteinExistence type="inferred from homology"/>
<feature type="chain" id="PRO_0000090730" description="Phosphatidate cytidylyltransferase">
    <location>
        <begin position="1"/>
        <end position="270"/>
    </location>
</feature>
<feature type="transmembrane region" description="Helical" evidence="2">
    <location>
        <begin position="19"/>
        <end position="39"/>
    </location>
</feature>
<feature type="transmembrane region" description="Helical" evidence="2">
    <location>
        <begin position="53"/>
        <end position="73"/>
    </location>
</feature>
<feature type="transmembrane region" description="Helical" evidence="2">
    <location>
        <begin position="76"/>
        <end position="96"/>
    </location>
</feature>
<feature type="transmembrane region" description="Helical" evidence="2">
    <location>
        <begin position="101"/>
        <end position="121"/>
    </location>
</feature>
<feature type="transmembrane region" description="Helical" evidence="2">
    <location>
        <begin position="126"/>
        <end position="146"/>
    </location>
</feature>
<feature type="transmembrane region" description="Helical" evidence="2">
    <location>
        <begin position="183"/>
        <end position="203"/>
    </location>
</feature>
<feature type="transmembrane region" description="Helical" evidence="2">
    <location>
        <begin position="248"/>
        <end position="268"/>
    </location>
</feature>
<accession>Q8G0E0</accession>
<accession>G0KA79</accession>
<protein>
    <recommendedName>
        <fullName>Phosphatidate cytidylyltransferase</fullName>
        <ecNumber>2.7.7.41</ecNumber>
    </recommendedName>
    <alternativeName>
        <fullName>CDP-DAG synthase</fullName>
    </alternativeName>
    <alternativeName>
        <fullName>CDP-DG synthase</fullName>
    </alternativeName>
    <alternativeName>
        <fullName>CDP-diacylglycerol synthase</fullName>
        <shortName>CDS</shortName>
    </alternativeName>
    <alternativeName>
        <fullName>CDP-diglyceride pyrophosphorylase</fullName>
    </alternativeName>
    <alternativeName>
        <fullName>CDP-diglyceride synthase</fullName>
    </alternativeName>
    <alternativeName>
        <fullName>CTP:phosphatidate cytidylyltransferase</fullName>
    </alternativeName>
</protein>
<comment type="catalytic activity">
    <reaction>
        <text>a 1,2-diacyl-sn-glycero-3-phosphate + CTP + H(+) = a CDP-1,2-diacyl-sn-glycerol + diphosphate</text>
        <dbReference type="Rhea" id="RHEA:16229"/>
        <dbReference type="ChEBI" id="CHEBI:15378"/>
        <dbReference type="ChEBI" id="CHEBI:33019"/>
        <dbReference type="ChEBI" id="CHEBI:37563"/>
        <dbReference type="ChEBI" id="CHEBI:58332"/>
        <dbReference type="ChEBI" id="CHEBI:58608"/>
        <dbReference type="EC" id="2.7.7.41"/>
    </reaction>
</comment>
<comment type="pathway">
    <text>Phospholipid metabolism; CDP-diacylglycerol biosynthesis; CDP-diacylglycerol from sn-glycerol 3-phosphate: step 3/3.</text>
</comment>
<comment type="subcellular location">
    <subcellularLocation>
        <location evidence="1">Cell inner membrane</location>
        <topology evidence="1">Multi-pass membrane protein</topology>
    </subcellularLocation>
</comment>
<comment type="similarity">
    <text evidence="3">Belongs to the CDS family.</text>
</comment>
<evidence type="ECO:0000250" key="1"/>
<evidence type="ECO:0000255" key="2"/>
<evidence type="ECO:0000305" key="3"/>
<reference key="1">
    <citation type="journal article" date="2002" name="Proc. Natl. Acad. Sci. U.S.A.">
        <title>The Brucella suis genome reveals fundamental similarities between animal and plant pathogens and symbionts.</title>
        <authorList>
            <person name="Paulsen I.T."/>
            <person name="Seshadri R."/>
            <person name="Nelson K.E."/>
            <person name="Eisen J.A."/>
            <person name="Heidelberg J.F."/>
            <person name="Read T.D."/>
            <person name="Dodson R.J."/>
            <person name="Umayam L.A."/>
            <person name="Brinkac L.M."/>
            <person name="Beanan M.J."/>
            <person name="Daugherty S.C."/>
            <person name="DeBoy R.T."/>
            <person name="Durkin A.S."/>
            <person name="Kolonay J.F."/>
            <person name="Madupu R."/>
            <person name="Nelson W.C."/>
            <person name="Ayodeji B."/>
            <person name="Kraul M."/>
            <person name="Shetty J."/>
            <person name="Malek J.A."/>
            <person name="Van Aken S.E."/>
            <person name="Riedmuller S."/>
            <person name="Tettelin H."/>
            <person name="Gill S.R."/>
            <person name="White O."/>
            <person name="Salzberg S.L."/>
            <person name="Hoover D.L."/>
            <person name="Lindler L.E."/>
            <person name="Halling S.M."/>
            <person name="Boyle S.M."/>
            <person name="Fraser C.M."/>
        </authorList>
    </citation>
    <scope>NUCLEOTIDE SEQUENCE [LARGE SCALE GENOMIC DNA]</scope>
    <source>
        <strain>1330</strain>
    </source>
</reference>
<reference key="2">
    <citation type="journal article" date="2011" name="J. Bacteriol.">
        <title>Revised genome sequence of Brucella suis 1330.</title>
        <authorList>
            <person name="Tae H."/>
            <person name="Shallom S."/>
            <person name="Settlage R."/>
            <person name="Preston D."/>
            <person name="Adams L.G."/>
            <person name="Garner H.R."/>
        </authorList>
    </citation>
    <scope>NUCLEOTIDE SEQUENCE [LARGE SCALE GENOMIC DNA]</scope>
    <source>
        <strain>1330</strain>
    </source>
</reference>
<organism>
    <name type="scientific">Brucella suis biovar 1 (strain 1330)</name>
    <dbReference type="NCBI Taxonomy" id="204722"/>
    <lineage>
        <taxon>Bacteria</taxon>
        <taxon>Pseudomonadati</taxon>
        <taxon>Pseudomonadota</taxon>
        <taxon>Alphaproteobacteria</taxon>
        <taxon>Hyphomicrobiales</taxon>
        <taxon>Brucellaceae</taxon>
        <taxon>Brucella/Ochrobactrum group</taxon>
        <taxon>Brucella</taxon>
    </lineage>
</organism>
<name>CDSA_BRUSU</name>
<sequence length="270" mass="28402">MSNLQTRIITAIVLGTITLWLTWVGGVGFTLFSIAIGLAMFYEWTELSATRQTAFSRLFGWAWLIVTGILLILDRGALLTIGFLVAGCAILLVTQWKSGRGWPAAGLFYAGFSALSLSLLRGDEPFGFTTIVFLFAVVWSTDIAAYFNGRALGGPKLAPRFSPNKTWSGAIGGAAAAVAGGLLVASLVAAPGGWGVPVLALLLSIVSQIGDLAESWVKRQFGAKDSGRLLPGHGGVLDRVDGLVAAAALLYLFGAIFAEPDVPSAIFFSF</sequence>
<keyword id="KW-0997">Cell inner membrane</keyword>
<keyword id="KW-1003">Cell membrane</keyword>
<keyword id="KW-0444">Lipid biosynthesis</keyword>
<keyword id="KW-0443">Lipid metabolism</keyword>
<keyword id="KW-0472">Membrane</keyword>
<keyword id="KW-0548">Nucleotidyltransferase</keyword>
<keyword id="KW-0594">Phospholipid biosynthesis</keyword>
<keyword id="KW-1208">Phospholipid metabolism</keyword>
<keyword id="KW-0808">Transferase</keyword>
<keyword id="KW-0812">Transmembrane</keyword>
<keyword id="KW-1133">Transmembrane helix</keyword>